<accession>Q1IPU7</accession>
<feature type="chain" id="PRO_1000019873" description="Probable cytosol aminopeptidase">
    <location>
        <begin position="1"/>
        <end position="512"/>
    </location>
</feature>
<feature type="active site" evidence="1">
    <location>
        <position position="293"/>
    </location>
</feature>
<feature type="active site" evidence="1">
    <location>
        <position position="367"/>
    </location>
</feature>
<feature type="binding site" evidence="1">
    <location>
        <position position="281"/>
    </location>
    <ligand>
        <name>Mn(2+)</name>
        <dbReference type="ChEBI" id="CHEBI:29035"/>
        <label>2</label>
    </ligand>
</feature>
<feature type="binding site" evidence="1">
    <location>
        <position position="286"/>
    </location>
    <ligand>
        <name>Mn(2+)</name>
        <dbReference type="ChEBI" id="CHEBI:29035"/>
        <label>1</label>
    </ligand>
</feature>
<feature type="binding site" evidence="1">
    <location>
        <position position="286"/>
    </location>
    <ligand>
        <name>Mn(2+)</name>
        <dbReference type="ChEBI" id="CHEBI:29035"/>
        <label>2</label>
    </ligand>
</feature>
<feature type="binding site" evidence="1">
    <location>
        <position position="304"/>
    </location>
    <ligand>
        <name>Mn(2+)</name>
        <dbReference type="ChEBI" id="CHEBI:29035"/>
        <label>2</label>
    </ligand>
</feature>
<feature type="binding site" evidence="1">
    <location>
        <position position="363"/>
    </location>
    <ligand>
        <name>Mn(2+)</name>
        <dbReference type="ChEBI" id="CHEBI:29035"/>
        <label>1</label>
    </ligand>
</feature>
<feature type="binding site" evidence="1">
    <location>
        <position position="365"/>
    </location>
    <ligand>
        <name>Mn(2+)</name>
        <dbReference type="ChEBI" id="CHEBI:29035"/>
        <label>1</label>
    </ligand>
</feature>
<feature type="binding site" evidence="1">
    <location>
        <position position="365"/>
    </location>
    <ligand>
        <name>Mn(2+)</name>
        <dbReference type="ChEBI" id="CHEBI:29035"/>
        <label>2</label>
    </ligand>
</feature>
<dbReference type="EC" id="3.4.11.1" evidence="1"/>
<dbReference type="EC" id="3.4.11.10" evidence="1"/>
<dbReference type="EMBL" id="CP000360">
    <property type="protein sequence ID" value="ABF41103.1"/>
    <property type="molecule type" value="Genomic_DNA"/>
</dbReference>
<dbReference type="RefSeq" id="WP_011522904.1">
    <property type="nucleotide sequence ID" value="NC_008009.1"/>
</dbReference>
<dbReference type="SMR" id="Q1IPU7"/>
<dbReference type="STRING" id="204669.Acid345_2102"/>
<dbReference type="EnsemblBacteria" id="ABF41103">
    <property type="protein sequence ID" value="ABF41103"/>
    <property type="gene ID" value="Acid345_2102"/>
</dbReference>
<dbReference type="KEGG" id="aba:Acid345_2102"/>
<dbReference type="eggNOG" id="COG0260">
    <property type="taxonomic scope" value="Bacteria"/>
</dbReference>
<dbReference type="HOGENOM" id="CLU_013734_2_2_0"/>
<dbReference type="OrthoDB" id="9809354at2"/>
<dbReference type="Proteomes" id="UP000002432">
    <property type="component" value="Chromosome"/>
</dbReference>
<dbReference type="GO" id="GO:0005737">
    <property type="term" value="C:cytoplasm"/>
    <property type="evidence" value="ECO:0007669"/>
    <property type="project" value="UniProtKB-SubCell"/>
</dbReference>
<dbReference type="GO" id="GO:0030145">
    <property type="term" value="F:manganese ion binding"/>
    <property type="evidence" value="ECO:0007669"/>
    <property type="project" value="UniProtKB-UniRule"/>
</dbReference>
<dbReference type="GO" id="GO:0070006">
    <property type="term" value="F:metalloaminopeptidase activity"/>
    <property type="evidence" value="ECO:0007669"/>
    <property type="project" value="InterPro"/>
</dbReference>
<dbReference type="GO" id="GO:0006508">
    <property type="term" value="P:proteolysis"/>
    <property type="evidence" value="ECO:0007669"/>
    <property type="project" value="UniProtKB-KW"/>
</dbReference>
<dbReference type="CDD" id="cd00433">
    <property type="entry name" value="Peptidase_M17"/>
    <property type="match status" value="1"/>
</dbReference>
<dbReference type="Gene3D" id="3.40.220.10">
    <property type="entry name" value="Leucine Aminopeptidase, subunit E, domain 1"/>
    <property type="match status" value="1"/>
</dbReference>
<dbReference type="Gene3D" id="3.40.630.10">
    <property type="entry name" value="Zn peptidases"/>
    <property type="match status" value="1"/>
</dbReference>
<dbReference type="HAMAP" id="MF_00181">
    <property type="entry name" value="Cytosol_peptidase_M17"/>
    <property type="match status" value="1"/>
</dbReference>
<dbReference type="InterPro" id="IPR011356">
    <property type="entry name" value="Leucine_aapep/pepB"/>
</dbReference>
<dbReference type="InterPro" id="IPR043472">
    <property type="entry name" value="Macro_dom-like"/>
</dbReference>
<dbReference type="InterPro" id="IPR000819">
    <property type="entry name" value="Peptidase_M17_C"/>
</dbReference>
<dbReference type="InterPro" id="IPR023042">
    <property type="entry name" value="Peptidase_M17_leu_NH2_pept"/>
</dbReference>
<dbReference type="InterPro" id="IPR008283">
    <property type="entry name" value="Peptidase_M17_N"/>
</dbReference>
<dbReference type="NCBIfam" id="NF002073">
    <property type="entry name" value="PRK00913.1-2"/>
    <property type="match status" value="1"/>
</dbReference>
<dbReference type="NCBIfam" id="NF002074">
    <property type="entry name" value="PRK00913.1-4"/>
    <property type="match status" value="1"/>
</dbReference>
<dbReference type="NCBIfam" id="NF002083">
    <property type="entry name" value="PRK00913.3-5"/>
    <property type="match status" value="1"/>
</dbReference>
<dbReference type="PANTHER" id="PTHR11963:SF23">
    <property type="entry name" value="CYTOSOL AMINOPEPTIDASE"/>
    <property type="match status" value="1"/>
</dbReference>
<dbReference type="PANTHER" id="PTHR11963">
    <property type="entry name" value="LEUCINE AMINOPEPTIDASE-RELATED"/>
    <property type="match status" value="1"/>
</dbReference>
<dbReference type="Pfam" id="PF00883">
    <property type="entry name" value="Peptidase_M17"/>
    <property type="match status" value="1"/>
</dbReference>
<dbReference type="Pfam" id="PF02789">
    <property type="entry name" value="Peptidase_M17_N"/>
    <property type="match status" value="1"/>
</dbReference>
<dbReference type="PRINTS" id="PR00481">
    <property type="entry name" value="LAMNOPPTDASE"/>
</dbReference>
<dbReference type="SUPFAM" id="SSF52949">
    <property type="entry name" value="Macro domain-like"/>
    <property type="match status" value="1"/>
</dbReference>
<dbReference type="SUPFAM" id="SSF53187">
    <property type="entry name" value="Zn-dependent exopeptidases"/>
    <property type="match status" value="1"/>
</dbReference>
<dbReference type="PROSITE" id="PS00631">
    <property type="entry name" value="CYTOSOL_AP"/>
    <property type="match status" value="1"/>
</dbReference>
<evidence type="ECO:0000255" key="1">
    <source>
        <dbReference type="HAMAP-Rule" id="MF_00181"/>
    </source>
</evidence>
<protein>
    <recommendedName>
        <fullName evidence="1">Probable cytosol aminopeptidase</fullName>
        <ecNumber evidence="1">3.4.11.1</ecNumber>
    </recommendedName>
    <alternativeName>
        <fullName evidence="1">Leucine aminopeptidase</fullName>
        <shortName evidence="1">LAP</shortName>
        <ecNumber evidence="1">3.4.11.10</ecNumber>
    </alternativeName>
    <alternativeName>
        <fullName evidence="1">Leucyl aminopeptidase</fullName>
    </alternativeName>
</protein>
<comment type="function">
    <text evidence="1">Presumably involved in the processing and regular turnover of intracellular proteins. Catalyzes the removal of unsubstituted N-terminal amino acids from various peptides.</text>
</comment>
<comment type="catalytic activity">
    <reaction evidence="1">
        <text>Release of an N-terminal amino acid, Xaa-|-Yaa-, in which Xaa is preferably Leu, but may be other amino acids including Pro although not Arg or Lys, and Yaa may be Pro. Amino acid amides and methyl esters are also readily hydrolyzed, but rates on arylamides are exceedingly low.</text>
        <dbReference type="EC" id="3.4.11.1"/>
    </reaction>
</comment>
<comment type="catalytic activity">
    <reaction evidence="1">
        <text>Release of an N-terminal amino acid, preferentially leucine, but not glutamic or aspartic acids.</text>
        <dbReference type="EC" id="3.4.11.10"/>
    </reaction>
</comment>
<comment type="cofactor">
    <cofactor evidence="1">
        <name>Mn(2+)</name>
        <dbReference type="ChEBI" id="CHEBI:29035"/>
    </cofactor>
    <text evidence="1">Binds 2 manganese ions per subunit.</text>
</comment>
<comment type="subcellular location">
    <subcellularLocation>
        <location evidence="1">Cytoplasm</location>
    </subcellularLocation>
</comment>
<comment type="similarity">
    <text evidence="1">Belongs to the peptidase M17 family.</text>
</comment>
<gene>
    <name evidence="1" type="primary">pepA</name>
    <name type="ordered locus">Acid345_2102</name>
</gene>
<keyword id="KW-0031">Aminopeptidase</keyword>
<keyword id="KW-0963">Cytoplasm</keyword>
<keyword id="KW-0378">Hydrolase</keyword>
<keyword id="KW-0464">Manganese</keyword>
<keyword id="KW-0479">Metal-binding</keyword>
<keyword id="KW-0645">Protease</keyword>
<keyword id="KW-1185">Reference proteome</keyword>
<organism>
    <name type="scientific">Koribacter versatilis (strain Ellin345)</name>
    <dbReference type="NCBI Taxonomy" id="204669"/>
    <lineage>
        <taxon>Bacteria</taxon>
        <taxon>Pseudomonadati</taxon>
        <taxon>Acidobacteriota</taxon>
        <taxon>Terriglobia</taxon>
        <taxon>Terriglobales</taxon>
        <taxon>Candidatus Korobacteraceae</taxon>
        <taxon>Candidatus Korobacter</taxon>
    </lineage>
</organism>
<name>AMPA_KORVE</name>
<proteinExistence type="inferred from homology"/>
<reference key="1">
    <citation type="journal article" date="2009" name="Appl. Environ. Microbiol.">
        <title>Three genomes from the phylum Acidobacteria provide insight into the lifestyles of these microorganisms in soils.</title>
        <authorList>
            <person name="Ward N.L."/>
            <person name="Challacombe J.F."/>
            <person name="Janssen P.H."/>
            <person name="Henrissat B."/>
            <person name="Coutinho P.M."/>
            <person name="Wu M."/>
            <person name="Xie G."/>
            <person name="Haft D.H."/>
            <person name="Sait M."/>
            <person name="Badger J."/>
            <person name="Barabote R.D."/>
            <person name="Bradley B."/>
            <person name="Brettin T.S."/>
            <person name="Brinkac L.M."/>
            <person name="Bruce D."/>
            <person name="Creasy T."/>
            <person name="Daugherty S.C."/>
            <person name="Davidsen T.M."/>
            <person name="DeBoy R.T."/>
            <person name="Detter J.C."/>
            <person name="Dodson R.J."/>
            <person name="Durkin A.S."/>
            <person name="Ganapathy A."/>
            <person name="Gwinn-Giglio M."/>
            <person name="Han C.S."/>
            <person name="Khouri H."/>
            <person name="Kiss H."/>
            <person name="Kothari S.P."/>
            <person name="Madupu R."/>
            <person name="Nelson K.E."/>
            <person name="Nelson W.C."/>
            <person name="Paulsen I."/>
            <person name="Penn K."/>
            <person name="Ren Q."/>
            <person name="Rosovitz M.J."/>
            <person name="Selengut J.D."/>
            <person name="Shrivastava S."/>
            <person name="Sullivan S.A."/>
            <person name="Tapia R."/>
            <person name="Thompson L.S."/>
            <person name="Watkins K.L."/>
            <person name="Yang Q."/>
            <person name="Yu C."/>
            <person name="Zafar N."/>
            <person name="Zhou L."/>
            <person name="Kuske C.R."/>
        </authorList>
    </citation>
    <scope>NUCLEOTIDE SEQUENCE [LARGE SCALE GENOMIC DNA]</scope>
    <source>
        <strain>Ellin345</strain>
    </source>
</reference>
<sequence>MKIHLSTLDPAQLETDALIVLAIDGGDKDNNKPQLQAKSDAFAKAAADLIASKEITGKLLEIATLHKPEGVKAKRLIVVGVGKAKSFTSYELRKAAGAAVRALKKSVKSAAIVAPENWGGAADPSTTSTLMFERGGLPEAVKAIAEGAVVANPDYNYYHSDRKTYELDELTILVPANGHANDLEAAMKEGHVIGESQNFTRDLVNEPGNRMTPTILGQRAKKMAEEVGIQCDVYSTDFLHEKKMGAFWSVSQGSEEPPALIVMKYEPAGAPQSPVLGLVGKGITFDTGGISIKPADGMEKMKYDMAGGAAMIGAMRAIALLKPNVRVIGVVCAAENMPSGKAQKPGDVQIAMSGKSIEIINTDAEGRLVLADGLHYAKQLGATHLIDAATLTGACMVALGGINAGVFANDEDYFNRFAEALKKSGEKMWRLPIDDDYKELIKSPIADIKNTGGRYGGAITAAMFLKEFVGETPWIHLDIAGVAWQEEAVPFLAKGPSGIAVRSIIELVQSFG</sequence>